<feature type="chain" id="PRO_0000158892" description="Adenylate kinase">
    <location>
        <begin position="1"/>
        <end position="187"/>
    </location>
</feature>
<feature type="region of interest" description="NMP" evidence="1">
    <location>
        <begin position="30"/>
        <end position="59"/>
    </location>
</feature>
<feature type="region of interest" description="LID" evidence="1">
    <location>
        <begin position="126"/>
        <end position="136"/>
    </location>
</feature>
<feature type="binding site" evidence="1">
    <location>
        <begin position="10"/>
        <end position="15"/>
    </location>
    <ligand>
        <name>ATP</name>
        <dbReference type="ChEBI" id="CHEBI:30616"/>
    </ligand>
</feature>
<feature type="binding site" evidence="1">
    <location>
        <position position="31"/>
    </location>
    <ligand>
        <name>AMP</name>
        <dbReference type="ChEBI" id="CHEBI:456215"/>
    </ligand>
</feature>
<feature type="binding site" evidence="1">
    <location>
        <position position="36"/>
    </location>
    <ligand>
        <name>AMP</name>
        <dbReference type="ChEBI" id="CHEBI:456215"/>
    </ligand>
</feature>
<feature type="binding site" evidence="1">
    <location>
        <begin position="57"/>
        <end position="59"/>
    </location>
    <ligand>
        <name>AMP</name>
        <dbReference type="ChEBI" id="CHEBI:456215"/>
    </ligand>
</feature>
<feature type="binding site" evidence="1">
    <location>
        <begin position="85"/>
        <end position="88"/>
    </location>
    <ligand>
        <name>AMP</name>
        <dbReference type="ChEBI" id="CHEBI:456215"/>
    </ligand>
</feature>
<feature type="binding site" evidence="1">
    <location>
        <position position="92"/>
    </location>
    <ligand>
        <name>AMP</name>
        <dbReference type="ChEBI" id="CHEBI:456215"/>
    </ligand>
</feature>
<feature type="binding site" evidence="1">
    <location>
        <position position="127"/>
    </location>
    <ligand>
        <name>ATP</name>
        <dbReference type="ChEBI" id="CHEBI:30616"/>
    </ligand>
</feature>
<feature type="binding site" evidence="1">
    <location>
        <position position="133"/>
    </location>
    <ligand>
        <name>AMP</name>
        <dbReference type="ChEBI" id="CHEBI:456215"/>
    </ligand>
</feature>
<feature type="binding site" evidence="1">
    <location>
        <position position="144"/>
    </location>
    <ligand>
        <name>AMP</name>
        <dbReference type="ChEBI" id="CHEBI:456215"/>
    </ligand>
</feature>
<feature type="binding site" evidence="1">
    <location>
        <position position="172"/>
    </location>
    <ligand>
        <name>ATP</name>
        <dbReference type="ChEBI" id="CHEBI:30616"/>
    </ligand>
</feature>
<proteinExistence type="inferred from homology"/>
<comment type="function">
    <text evidence="1">Catalyzes the reversible transfer of the terminal phosphate group between ATP and AMP. Plays an important role in cellular energy homeostasis and in adenine nucleotide metabolism.</text>
</comment>
<comment type="catalytic activity">
    <reaction evidence="1">
        <text>AMP + ATP = 2 ADP</text>
        <dbReference type="Rhea" id="RHEA:12973"/>
        <dbReference type="ChEBI" id="CHEBI:30616"/>
        <dbReference type="ChEBI" id="CHEBI:456215"/>
        <dbReference type="ChEBI" id="CHEBI:456216"/>
        <dbReference type="EC" id="2.7.4.3"/>
    </reaction>
</comment>
<comment type="pathway">
    <text evidence="1">Purine metabolism; AMP biosynthesis via salvage pathway; AMP from ADP: step 1/1.</text>
</comment>
<comment type="subunit">
    <text evidence="1">Monomer.</text>
</comment>
<comment type="subcellular location">
    <subcellularLocation>
        <location evidence="1">Cytoplasm</location>
    </subcellularLocation>
</comment>
<comment type="domain">
    <text evidence="1">Consists of three domains, a large central CORE domain and two small peripheral domains, NMPbind and LID, which undergo movements during catalysis. The LID domain closes over the site of phosphoryl transfer upon ATP binding. Assembling and dissambling the active center during each catalytic cycle provides an effective means to prevent ATP hydrolysis.</text>
</comment>
<comment type="similarity">
    <text evidence="1">Belongs to the adenylate kinase family.</text>
</comment>
<protein>
    <recommendedName>
        <fullName evidence="1">Adenylate kinase</fullName>
        <shortName evidence="1">AK</shortName>
        <ecNumber evidence="1">2.7.4.3</ecNumber>
    </recommendedName>
    <alternativeName>
        <fullName evidence="1">ATP-AMP transphosphorylase</fullName>
    </alternativeName>
    <alternativeName>
        <fullName evidence="1">ATP:AMP phosphotransferase</fullName>
    </alternativeName>
    <alternativeName>
        <fullName evidence="1">Adenylate monophosphate kinase</fullName>
    </alternativeName>
</protein>
<gene>
    <name evidence="1" type="primary">adk</name>
    <name type="ordered locus">PD_0222</name>
</gene>
<evidence type="ECO:0000255" key="1">
    <source>
        <dbReference type="HAMAP-Rule" id="MF_00235"/>
    </source>
</evidence>
<sequence>MRLVLLGPPGSGKGTQAAQMQETLQIPHISTGDLLRSEVVAGTPLGLQAKQVMAQGDLVSDAILLGMLESRLSHTDVVKGFILDGYPRNLSQAAALDGLLAKFGHPLNAVVQLEVPTDVLVERIAGRAQAEGREDDTPDAVRKRLQVYNDSTAPVIGFYQQRGILLRVDGVGRLDEVSQRIAVALGC</sequence>
<accession>Q87ES6</accession>
<reference key="1">
    <citation type="journal article" date="2003" name="J. Bacteriol.">
        <title>Comparative analyses of the complete genome sequences of Pierce's disease and citrus variegated chlorosis strains of Xylella fastidiosa.</title>
        <authorList>
            <person name="Van Sluys M.A."/>
            <person name="de Oliveira M.C."/>
            <person name="Monteiro-Vitorello C.B."/>
            <person name="Miyaki C.Y."/>
            <person name="Furlan L.R."/>
            <person name="Camargo L.E.A."/>
            <person name="da Silva A.C.R."/>
            <person name="Moon D.H."/>
            <person name="Takita M.A."/>
            <person name="Lemos E.G.M."/>
            <person name="Machado M.A."/>
            <person name="Ferro M.I.T."/>
            <person name="da Silva F.R."/>
            <person name="Goldman M.H.S."/>
            <person name="Goldman G.H."/>
            <person name="Lemos M.V.F."/>
            <person name="El-Dorry H."/>
            <person name="Tsai S.M."/>
            <person name="Carrer H."/>
            <person name="Carraro D.M."/>
            <person name="de Oliveira R.C."/>
            <person name="Nunes L.R."/>
            <person name="Siqueira W.J."/>
            <person name="Coutinho L.L."/>
            <person name="Kimura E.T."/>
            <person name="Ferro E.S."/>
            <person name="Harakava R."/>
            <person name="Kuramae E.E."/>
            <person name="Marino C.L."/>
            <person name="Giglioti E."/>
            <person name="Abreu I.L."/>
            <person name="Alves L.M.C."/>
            <person name="do Amaral A.M."/>
            <person name="Baia G.S."/>
            <person name="Blanco S.R."/>
            <person name="Brito M.S."/>
            <person name="Cannavan F.S."/>
            <person name="Celestino A.V."/>
            <person name="da Cunha A.F."/>
            <person name="Fenille R.C."/>
            <person name="Ferro J.A."/>
            <person name="Formighieri E.F."/>
            <person name="Kishi L.T."/>
            <person name="Leoni S.G."/>
            <person name="Oliveira A.R."/>
            <person name="Rosa V.E. Jr."/>
            <person name="Sassaki F.T."/>
            <person name="Sena J.A.D."/>
            <person name="de Souza A.A."/>
            <person name="Truffi D."/>
            <person name="Tsukumo F."/>
            <person name="Yanai G.M."/>
            <person name="Zaros L.G."/>
            <person name="Civerolo E.L."/>
            <person name="Simpson A.J.G."/>
            <person name="Almeida N.F. Jr."/>
            <person name="Setubal J.C."/>
            <person name="Kitajima J.P."/>
        </authorList>
    </citation>
    <scope>NUCLEOTIDE SEQUENCE [LARGE SCALE GENOMIC DNA]</scope>
    <source>
        <strain>Temecula1 / ATCC 700964</strain>
    </source>
</reference>
<name>KAD_XYLFT</name>
<dbReference type="EC" id="2.7.4.3" evidence="1"/>
<dbReference type="EMBL" id="AE009442">
    <property type="protein sequence ID" value="AAO28113.1"/>
    <property type="molecule type" value="Genomic_DNA"/>
</dbReference>
<dbReference type="RefSeq" id="WP_004087997.1">
    <property type="nucleotide sequence ID" value="NC_004556.1"/>
</dbReference>
<dbReference type="SMR" id="Q87ES6"/>
<dbReference type="KEGG" id="xft:PD_0222"/>
<dbReference type="HOGENOM" id="CLU_032354_1_2_6"/>
<dbReference type="UniPathway" id="UPA00588">
    <property type="reaction ID" value="UER00649"/>
</dbReference>
<dbReference type="Proteomes" id="UP000002516">
    <property type="component" value="Chromosome"/>
</dbReference>
<dbReference type="GO" id="GO:0005737">
    <property type="term" value="C:cytoplasm"/>
    <property type="evidence" value="ECO:0007669"/>
    <property type="project" value="UniProtKB-SubCell"/>
</dbReference>
<dbReference type="GO" id="GO:0004017">
    <property type="term" value="F:adenylate kinase activity"/>
    <property type="evidence" value="ECO:0007669"/>
    <property type="project" value="UniProtKB-UniRule"/>
</dbReference>
<dbReference type="GO" id="GO:0005524">
    <property type="term" value="F:ATP binding"/>
    <property type="evidence" value="ECO:0007669"/>
    <property type="project" value="UniProtKB-UniRule"/>
</dbReference>
<dbReference type="GO" id="GO:0044209">
    <property type="term" value="P:AMP salvage"/>
    <property type="evidence" value="ECO:0007669"/>
    <property type="project" value="UniProtKB-UniRule"/>
</dbReference>
<dbReference type="CDD" id="cd01428">
    <property type="entry name" value="ADK"/>
    <property type="match status" value="1"/>
</dbReference>
<dbReference type="Gene3D" id="3.40.50.300">
    <property type="entry name" value="P-loop containing nucleotide triphosphate hydrolases"/>
    <property type="match status" value="1"/>
</dbReference>
<dbReference type="HAMAP" id="MF_00235">
    <property type="entry name" value="Adenylate_kinase_Adk"/>
    <property type="match status" value="1"/>
</dbReference>
<dbReference type="InterPro" id="IPR000850">
    <property type="entry name" value="Adenylat/UMP-CMP_kin"/>
</dbReference>
<dbReference type="InterPro" id="IPR033690">
    <property type="entry name" value="Adenylat_kinase_CS"/>
</dbReference>
<dbReference type="InterPro" id="IPR027417">
    <property type="entry name" value="P-loop_NTPase"/>
</dbReference>
<dbReference type="NCBIfam" id="NF001381">
    <property type="entry name" value="PRK00279.1-3"/>
    <property type="match status" value="1"/>
</dbReference>
<dbReference type="NCBIfam" id="NF011100">
    <property type="entry name" value="PRK14527.1"/>
    <property type="match status" value="1"/>
</dbReference>
<dbReference type="NCBIfam" id="NF011104">
    <property type="entry name" value="PRK14531.1"/>
    <property type="match status" value="1"/>
</dbReference>
<dbReference type="NCBIfam" id="NF011105">
    <property type="entry name" value="PRK14532.1"/>
    <property type="match status" value="1"/>
</dbReference>
<dbReference type="PANTHER" id="PTHR23359">
    <property type="entry name" value="NUCLEOTIDE KINASE"/>
    <property type="match status" value="1"/>
</dbReference>
<dbReference type="Pfam" id="PF00406">
    <property type="entry name" value="ADK"/>
    <property type="match status" value="1"/>
</dbReference>
<dbReference type="PRINTS" id="PR00094">
    <property type="entry name" value="ADENYLTKNASE"/>
</dbReference>
<dbReference type="SUPFAM" id="SSF52540">
    <property type="entry name" value="P-loop containing nucleoside triphosphate hydrolases"/>
    <property type="match status" value="1"/>
</dbReference>
<dbReference type="PROSITE" id="PS00113">
    <property type="entry name" value="ADENYLATE_KINASE"/>
    <property type="match status" value="1"/>
</dbReference>
<organism>
    <name type="scientific">Xylella fastidiosa (strain Temecula1 / ATCC 700964)</name>
    <dbReference type="NCBI Taxonomy" id="183190"/>
    <lineage>
        <taxon>Bacteria</taxon>
        <taxon>Pseudomonadati</taxon>
        <taxon>Pseudomonadota</taxon>
        <taxon>Gammaproteobacteria</taxon>
        <taxon>Lysobacterales</taxon>
        <taxon>Lysobacteraceae</taxon>
        <taxon>Xylella</taxon>
    </lineage>
</organism>
<keyword id="KW-0067">ATP-binding</keyword>
<keyword id="KW-0963">Cytoplasm</keyword>
<keyword id="KW-0418">Kinase</keyword>
<keyword id="KW-0545">Nucleotide biosynthesis</keyword>
<keyword id="KW-0547">Nucleotide-binding</keyword>
<keyword id="KW-1185">Reference proteome</keyword>
<keyword id="KW-0808">Transferase</keyword>